<protein>
    <recommendedName>
        <fullName>Carbohydrate sulfotransferase 15</fullName>
        <ecNumber>2.8.2.33</ecNumber>
    </recommendedName>
    <alternativeName>
        <fullName>N-acetylgalactosamine 4-sulfate 6-O-sulfotransferase</fullName>
        <shortName>GalNAc4S-6ST</shortName>
    </alternativeName>
</protein>
<gene>
    <name type="primary">GALNAC4S6ST</name>
</gene>
<feature type="chain" id="PRO_0000225626" description="Carbohydrate sulfotransferase 15">
    <location>
        <begin position="1" status="less than"/>
        <end position="159" status="greater than"/>
    </location>
</feature>
<feature type="topological domain" description="Lumenal" evidence="1">
    <location>
        <begin position="1" status="less than"/>
        <end position="159"/>
    </location>
</feature>
<feature type="glycosylation site" description="N-linked (GlcNAc...) asparagine" evidence="1">
    <location>
        <position position="42"/>
    </location>
</feature>
<feature type="glycosylation site" description="N-linked (GlcNAc...) asparagine" evidence="1">
    <location>
        <position position="112"/>
    </location>
</feature>
<feature type="non-consecutive residues" evidence="4">
    <location>
        <begin position="10"/>
        <end position="11"/>
    </location>
</feature>
<feature type="non-consecutive residues" evidence="4">
    <location>
        <begin position="20"/>
        <end position="21"/>
    </location>
</feature>
<feature type="non-terminal residue">
    <location>
        <position position="1"/>
    </location>
</feature>
<feature type="non-terminal residue">
    <location>
        <position position="159"/>
    </location>
</feature>
<reference key="1">
    <citation type="journal article" date="2001" name="J. Biol. Chem.">
        <title>Human N-acetylgalactosamine 4-sulfate 6-O-sulfotransferase cDNA is related to human B cell recombination activating gene-associated gene.</title>
        <authorList>
            <person name="Ohtake S."/>
            <person name="Ito Y."/>
            <person name="Fukuta M."/>
            <person name="Habuchi O."/>
        </authorList>
    </citation>
    <scope>PROTEIN SEQUENCE OF 1-31 AND 149-159</scope>
    <scope>NUCLEOTIDE SEQUENCE [MRNA] OF 32-148</scope>
    <source>
        <tissue>Cartilage</tissue>
    </source>
</reference>
<reference key="2">
    <citation type="journal article" date="2000" name="J. Biol. Chem.">
        <title>Purification and characterization of N-acetylgalactosamine 4-sulfate 6-O-sulfotransferase from the squid cartilage.</title>
        <authorList>
            <person name="Ito Y."/>
            <person name="Habuchi O."/>
        </authorList>
    </citation>
    <scope>COFACTOR</scope>
    <scope>BIOPHYSICOCHEMICAL PROPERTIES</scope>
</reference>
<reference key="3">
    <citation type="journal article" date="2002" name="Anal. Biochem.">
        <title>Enzymatic synthesis of chondroitin sulfate E by N-acetylgalactosamine 4-sulfate 6-O-sulfotransferase purified from squid cartilage.</title>
        <authorList>
            <person name="Habuchi O."/>
            <person name="Moroi R."/>
            <person name="Ohtake S."/>
        </authorList>
    </citation>
    <scope>FUNCTION</scope>
</reference>
<sequence length="159" mass="19155">SGTTDFYRRIITSEASASTLSLENFXHRVTESINMYEKCFKNETMRKCVYDRSLSLLSGVRLRIGLYWIYLQDWFSVFPKENFYIIKTEDYAKCLKCTFKKVYRFLGLPQLNRTNEAFMESIPKANTRRFKDTKMGKMWKETYELLEKFYQPHNERLVK</sequence>
<name>CHSTF_NOTSL</name>
<proteinExistence type="evidence at protein level"/>
<dbReference type="EC" id="2.8.2.33"/>
<dbReference type="EMBL" id="AB062424">
    <property type="protein sequence ID" value="BAB72146.1"/>
    <property type="molecule type" value="mRNA"/>
</dbReference>
<dbReference type="GlyCosmos" id="Q8WTN9">
    <property type="glycosylation" value="2 sites, No reported glycans"/>
</dbReference>
<dbReference type="KEGG" id="ag:BAB72146"/>
<dbReference type="SABIO-RK" id="Q8WTN9"/>
<dbReference type="GO" id="GO:0000139">
    <property type="term" value="C:Golgi membrane"/>
    <property type="evidence" value="ECO:0007669"/>
    <property type="project" value="UniProtKB-SubCell"/>
</dbReference>
<dbReference type="GO" id="GO:0050659">
    <property type="term" value="F:N-acetylgalactosamine 4-sulfate 6-O-sulfotransferase activity"/>
    <property type="evidence" value="ECO:0007669"/>
    <property type="project" value="UniProtKB-EC"/>
</dbReference>
<dbReference type="GO" id="GO:0019319">
    <property type="term" value="P:hexose biosynthetic process"/>
    <property type="evidence" value="ECO:0007669"/>
    <property type="project" value="TreeGrafter"/>
</dbReference>
<dbReference type="Gene3D" id="3.40.50.300">
    <property type="entry name" value="P-loop containing nucleotide triphosphate hydrolases"/>
    <property type="match status" value="1"/>
</dbReference>
<dbReference type="InterPro" id="IPR052654">
    <property type="entry name" value="CS_Sulfotransferase"/>
</dbReference>
<dbReference type="InterPro" id="IPR027417">
    <property type="entry name" value="P-loop_NTPase"/>
</dbReference>
<dbReference type="InterPro" id="IPR000863">
    <property type="entry name" value="Sulfotransferase_dom"/>
</dbReference>
<dbReference type="PANTHER" id="PTHR15723">
    <property type="entry name" value="CARBOHYDRATE SULFOTRANSFERASE 15"/>
    <property type="match status" value="1"/>
</dbReference>
<dbReference type="PANTHER" id="PTHR15723:SF0">
    <property type="entry name" value="CARBOHYDRATE SULFOTRANSFERASE 15"/>
    <property type="match status" value="1"/>
</dbReference>
<dbReference type="Pfam" id="PF00685">
    <property type="entry name" value="Sulfotransfer_1"/>
    <property type="match status" value="1"/>
</dbReference>
<dbReference type="SUPFAM" id="SSF52540">
    <property type="entry name" value="P-loop containing nucleoside triphosphate hydrolases"/>
    <property type="match status" value="1"/>
</dbReference>
<organism>
    <name type="scientific">Nototodarus sloanii</name>
    <name type="common">Wellington flying squid</name>
    <name type="synonym">Ommastrephes sloanei</name>
    <dbReference type="NCBI Taxonomy" id="215440"/>
    <lineage>
        <taxon>Eukaryota</taxon>
        <taxon>Metazoa</taxon>
        <taxon>Spiralia</taxon>
        <taxon>Lophotrochozoa</taxon>
        <taxon>Mollusca</taxon>
        <taxon>Cephalopoda</taxon>
        <taxon>Coleoidea</taxon>
        <taxon>Decapodiformes</taxon>
        <taxon>Oegopsida</taxon>
        <taxon>Ommastrephidae</taxon>
        <taxon>Nototodarus</taxon>
    </lineage>
</organism>
<accession>Q8WTN9</accession>
<comment type="function">
    <text evidence="3">Sulfotransferase that transfers sulfate from 3'-phosphoadenosine 5'-phosphosulfate (PAPS) to the C-6 hydroxyl group of the GalNAc 4-sulfate residue of chondroitin sulfate A and forms chondroitin sulfate E containing GlcA-GalNAc(4,6-SO(4)) repeating units.</text>
</comment>
<comment type="catalytic activity">
    <reaction>
        <text>dermatan 4'-sulfate + n 3'-phosphoadenylyl sulfate = dermatan 4',6'-bissulfate + n adenosine 3',5'-bisphosphate + n H(+)</text>
        <dbReference type="Rhea" id="RHEA:54304"/>
        <dbReference type="Rhea" id="RHEA-COMP:9965"/>
        <dbReference type="Rhea" id="RHEA-COMP:13850"/>
        <dbReference type="ChEBI" id="CHEBI:15378"/>
        <dbReference type="ChEBI" id="CHEBI:58339"/>
        <dbReference type="ChEBI" id="CHEBI:58343"/>
        <dbReference type="ChEBI" id="CHEBI:58465"/>
        <dbReference type="ChEBI" id="CHEBI:138121"/>
        <dbReference type="EC" id="2.8.2.33"/>
    </reaction>
</comment>
<comment type="catalytic activity">
    <reaction>
        <text>chondroitin 4'-sulfate + n 3'-phosphoadenylyl sulfate = chondroitin 4',6'-bissulfate + n adenosine 3',5'-bisphosphate + n H(+)</text>
        <dbReference type="Rhea" id="RHEA:54300"/>
        <dbReference type="Rhea" id="RHEA-COMP:9829"/>
        <dbReference type="Rhea" id="RHEA-COMP:13849"/>
        <dbReference type="ChEBI" id="CHEBI:15378"/>
        <dbReference type="ChEBI" id="CHEBI:58339"/>
        <dbReference type="ChEBI" id="CHEBI:58343"/>
        <dbReference type="ChEBI" id="CHEBI:58422"/>
        <dbReference type="ChEBI" id="CHEBI:138112"/>
        <dbReference type="EC" id="2.8.2.33"/>
    </reaction>
</comment>
<comment type="cofactor">
    <cofactor evidence="2">
        <name>a divalent metal cation</name>
        <dbReference type="ChEBI" id="CHEBI:60240"/>
    </cofactor>
</comment>
<comment type="cofactor">
    <cofactor evidence="2">
        <name>glutathione</name>
        <dbReference type="ChEBI" id="CHEBI:57925"/>
    </cofactor>
</comment>
<comment type="biophysicochemical properties">
    <kinetics>
        <KM evidence="2">0.5 uM for PAPS</KM>
        <KM evidence="2">1.1 uM for chondroitin sulfate A</KM>
        <KM evidence="2">0.13 uM for dermatan sulfate</KM>
    </kinetics>
</comment>
<comment type="subcellular location">
    <subcellularLocation>
        <location evidence="4">Golgi apparatus membrane</location>
        <topology evidence="4">Single-pass type II membrane protein</topology>
    </subcellularLocation>
</comment>
<comment type="miscellaneous">
    <text>In contrast to the human protein, it does not transfer sulfate to the unique non-reducing terminal sequence GalNAc(4SO4)-GlcA(2SO4)-GalNAc(6SO4).</text>
</comment>
<comment type="similarity">
    <text evidence="4">Belongs to the sulfotransferase 1 family.</text>
</comment>
<keyword id="KW-0903">Direct protein sequencing</keyword>
<keyword id="KW-0325">Glycoprotein</keyword>
<keyword id="KW-0333">Golgi apparatus</keyword>
<keyword id="KW-0472">Membrane</keyword>
<keyword id="KW-0808">Transferase</keyword>
<evidence type="ECO:0000255" key="1"/>
<evidence type="ECO:0000269" key="2">
    <source>
    </source>
</evidence>
<evidence type="ECO:0000269" key="3">
    <source>
    </source>
</evidence>
<evidence type="ECO:0000305" key="4"/>